<gene>
    <name evidence="1" type="primary">rpsB</name>
    <name type="ordered locus">Ecaj_0517</name>
</gene>
<feature type="chain" id="PRO_1000003955" description="Small ribosomal subunit protein uS2">
    <location>
        <begin position="1"/>
        <end position="291"/>
    </location>
</feature>
<feature type="region of interest" description="Disordered" evidence="2">
    <location>
        <begin position="254"/>
        <end position="291"/>
    </location>
</feature>
<feature type="compositionally biased region" description="Low complexity" evidence="2">
    <location>
        <begin position="263"/>
        <end position="277"/>
    </location>
</feature>
<accession>Q3YRV2</accession>
<dbReference type="EMBL" id="CP000107">
    <property type="protein sequence ID" value="AAZ68553.1"/>
    <property type="molecule type" value="Genomic_DNA"/>
</dbReference>
<dbReference type="RefSeq" id="WP_011304631.1">
    <property type="nucleotide sequence ID" value="NC_007354.1"/>
</dbReference>
<dbReference type="SMR" id="Q3YRV2"/>
<dbReference type="FunCoup" id="Q3YRV2">
    <property type="interactions" value="365"/>
</dbReference>
<dbReference type="STRING" id="269484.Ecaj_0517"/>
<dbReference type="KEGG" id="ecn:Ecaj_0517"/>
<dbReference type="eggNOG" id="COG0052">
    <property type="taxonomic scope" value="Bacteria"/>
</dbReference>
<dbReference type="HOGENOM" id="CLU_040318_2_1_5"/>
<dbReference type="InParanoid" id="Q3YRV2"/>
<dbReference type="Proteomes" id="UP000000435">
    <property type="component" value="Chromosome"/>
</dbReference>
<dbReference type="GO" id="GO:0022627">
    <property type="term" value="C:cytosolic small ribosomal subunit"/>
    <property type="evidence" value="ECO:0007669"/>
    <property type="project" value="TreeGrafter"/>
</dbReference>
<dbReference type="GO" id="GO:0003735">
    <property type="term" value="F:structural constituent of ribosome"/>
    <property type="evidence" value="ECO:0007669"/>
    <property type="project" value="InterPro"/>
</dbReference>
<dbReference type="GO" id="GO:0006412">
    <property type="term" value="P:translation"/>
    <property type="evidence" value="ECO:0007669"/>
    <property type="project" value="UniProtKB-UniRule"/>
</dbReference>
<dbReference type="CDD" id="cd01425">
    <property type="entry name" value="RPS2"/>
    <property type="match status" value="1"/>
</dbReference>
<dbReference type="Gene3D" id="3.40.50.10490">
    <property type="entry name" value="Glucose-6-phosphate isomerase like protein, domain 1"/>
    <property type="match status" value="1"/>
</dbReference>
<dbReference type="Gene3D" id="1.10.287.610">
    <property type="entry name" value="Helix hairpin bin"/>
    <property type="match status" value="1"/>
</dbReference>
<dbReference type="HAMAP" id="MF_00291_B">
    <property type="entry name" value="Ribosomal_uS2_B"/>
    <property type="match status" value="1"/>
</dbReference>
<dbReference type="InterPro" id="IPR001865">
    <property type="entry name" value="Ribosomal_uS2"/>
</dbReference>
<dbReference type="InterPro" id="IPR005706">
    <property type="entry name" value="Ribosomal_uS2_bac/mit/plastid"/>
</dbReference>
<dbReference type="InterPro" id="IPR018130">
    <property type="entry name" value="Ribosomal_uS2_CS"/>
</dbReference>
<dbReference type="InterPro" id="IPR023591">
    <property type="entry name" value="Ribosomal_uS2_flav_dom_sf"/>
</dbReference>
<dbReference type="NCBIfam" id="TIGR01011">
    <property type="entry name" value="rpsB_bact"/>
    <property type="match status" value="1"/>
</dbReference>
<dbReference type="PANTHER" id="PTHR12534">
    <property type="entry name" value="30S RIBOSOMAL PROTEIN S2 PROKARYOTIC AND ORGANELLAR"/>
    <property type="match status" value="1"/>
</dbReference>
<dbReference type="PANTHER" id="PTHR12534:SF0">
    <property type="entry name" value="SMALL RIBOSOMAL SUBUNIT PROTEIN US2M"/>
    <property type="match status" value="1"/>
</dbReference>
<dbReference type="Pfam" id="PF00318">
    <property type="entry name" value="Ribosomal_S2"/>
    <property type="match status" value="1"/>
</dbReference>
<dbReference type="PRINTS" id="PR00395">
    <property type="entry name" value="RIBOSOMALS2"/>
</dbReference>
<dbReference type="SUPFAM" id="SSF52313">
    <property type="entry name" value="Ribosomal protein S2"/>
    <property type="match status" value="1"/>
</dbReference>
<dbReference type="PROSITE" id="PS00962">
    <property type="entry name" value="RIBOSOMAL_S2_1"/>
    <property type="match status" value="1"/>
</dbReference>
<dbReference type="PROSITE" id="PS00963">
    <property type="entry name" value="RIBOSOMAL_S2_2"/>
    <property type="match status" value="1"/>
</dbReference>
<keyword id="KW-0687">Ribonucleoprotein</keyword>
<keyword id="KW-0689">Ribosomal protein</keyword>
<proteinExistence type="inferred from homology"/>
<name>RS2_EHRCJ</name>
<reference key="1">
    <citation type="journal article" date="2006" name="J. Bacteriol.">
        <title>The genome of the obligately intracellular bacterium Ehrlichia canis reveals themes of complex membrane structure and immune evasion strategies.</title>
        <authorList>
            <person name="Mavromatis K."/>
            <person name="Doyle C.K."/>
            <person name="Lykidis A."/>
            <person name="Ivanova N."/>
            <person name="Francino M.P."/>
            <person name="Chain P."/>
            <person name="Shin M."/>
            <person name="Malfatti S."/>
            <person name="Larimer F."/>
            <person name="Copeland A."/>
            <person name="Detter J.C."/>
            <person name="Land M."/>
            <person name="Richardson P.M."/>
            <person name="Yu X.J."/>
            <person name="Walker D.H."/>
            <person name="McBride J.W."/>
            <person name="Kyrpides N.C."/>
        </authorList>
    </citation>
    <scope>NUCLEOTIDE SEQUENCE [LARGE SCALE GENOMIC DNA]</scope>
    <source>
        <strain>Jake</strain>
    </source>
</reference>
<organism>
    <name type="scientific">Ehrlichia canis (strain Jake)</name>
    <dbReference type="NCBI Taxonomy" id="269484"/>
    <lineage>
        <taxon>Bacteria</taxon>
        <taxon>Pseudomonadati</taxon>
        <taxon>Pseudomonadota</taxon>
        <taxon>Alphaproteobacteria</taxon>
        <taxon>Rickettsiales</taxon>
        <taxon>Anaplasmataceae</taxon>
        <taxon>Ehrlichia</taxon>
    </lineage>
</organism>
<evidence type="ECO:0000255" key="1">
    <source>
        <dbReference type="HAMAP-Rule" id="MF_00291"/>
    </source>
</evidence>
<evidence type="ECO:0000256" key="2">
    <source>
        <dbReference type="SAM" id="MobiDB-lite"/>
    </source>
</evidence>
<evidence type="ECO:0000305" key="3"/>
<comment type="similarity">
    <text evidence="1">Belongs to the universal ribosomal protein uS2 family.</text>
</comment>
<sequence length="291" mass="32693">MVNLPKFTMRDLVESGVHFGHKASRWNPKMAPYIYGVYNDIHIINLQNTVVLLKNALKALYDVVLKRGRVLFIGTKVQASAIIADEAIRCGQYYVNNRWLGGMLTNWETISLSIKKLKEYEKLIENVDNQFTKKELLLFEKKRAKLDRSIGGICNMGGLPHVLFVIDTNKEHIAIKEANKLNIPVIAVLDTNSDPTGIDYPIPGNDDAVRSIDFFCKIVSDTILEAIRSDLAKSGINVDGIKDFSVEKRDDLLRTSNRDNKNNKNNNNTDNTDNAASIKEEDLIGGSNNEN</sequence>
<protein>
    <recommendedName>
        <fullName evidence="1">Small ribosomal subunit protein uS2</fullName>
    </recommendedName>
    <alternativeName>
        <fullName evidence="3">30S ribosomal protein S2</fullName>
    </alternativeName>
</protein>